<feature type="transit peptide" description="Chloroplast" evidence="1">
    <location>
        <begin position="1"/>
        <end position="36"/>
    </location>
</feature>
<feature type="chain" id="PRO_0000443063" description="Senescence-associated protein AAF, chloroplastic">
    <location>
        <begin position="37"/>
        <end position="417"/>
    </location>
</feature>
<feature type="sequence conflict" description="In Ref. 4; AAM63763." evidence="6" ref="4">
    <original>I</original>
    <variation>V</variation>
    <location>
        <position position="44"/>
    </location>
</feature>
<feature type="sequence conflict" description="In Ref. 4; AAM63763." evidence="6" ref="4">
    <original>F</original>
    <variation>L</variation>
    <location>
        <position position="59"/>
    </location>
</feature>
<feature type="sequence conflict" description="In Ref. 1; AAQ15186." evidence="6" ref="1">
    <original>S</original>
    <variation>P</variation>
    <location>
        <position position="74"/>
    </location>
</feature>
<feature type="sequence conflict" description="In Ref. 1; AAQ15186." evidence="6" ref="1">
    <original>V</original>
    <variation>A</variation>
    <location>
        <position position="116"/>
    </location>
</feature>
<feature type="sequence conflict" description="In Ref. 4; AAM63763." evidence="6" ref="4">
    <original>F</original>
    <variation>L</variation>
    <location>
        <position position="181"/>
    </location>
</feature>
<feature type="sequence conflict" description="In Ref. 4; AAM63763." evidence="6" ref="4">
    <original>L</original>
    <variation>F</variation>
    <location>
        <position position="222"/>
    </location>
</feature>
<feature type="sequence conflict" description="In Ref. 4; AAM63763." evidence="6" ref="4">
    <original>VDSLV</original>
    <variation>LDSLL</variation>
    <location>
        <begin position="240"/>
        <end position="244"/>
    </location>
</feature>
<feature type="sequence conflict" description="In Ref. 4; AAM63763." evidence="6" ref="4">
    <original>R</original>
    <variation>T</variation>
    <location>
        <position position="403"/>
    </location>
</feature>
<evidence type="ECO:0000255" key="1"/>
<evidence type="ECO:0000269" key="2">
    <source>
    </source>
</evidence>
<evidence type="ECO:0000269" key="3">
    <source>
    </source>
</evidence>
<evidence type="ECO:0000303" key="4">
    <source>
    </source>
</evidence>
<evidence type="ECO:0000303" key="5">
    <source>
    </source>
</evidence>
<evidence type="ECO:0000305" key="6"/>
<evidence type="ECO:0000312" key="7">
    <source>
        <dbReference type="Araport" id="AT1G66330"/>
    </source>
</evidence>
<evidence type="ECO:0000312" key="8">
    <source>
        <dbReference type="EMBL" id="AAG52167.1"/>
    </source>
</evidence>
<dbReference type="EMBL" id="AF359253">
    <property type="protein sequence ID" value="AAQ15186.1"/>
    <property type="molecule type" value="mRNA"/>
</dbReference>
<dbReference type="EMBL" id="AC020665">
    <property type="protein sequence ID" value="AAG52167.1"/>
    <property type="molecule type" value="Genomic_DNA"/>
</dbReference>
<dbReference type="EMBL" id="CP002684">
    <property type="protein sequence ID" value="AEE34495.1"/>
    <property type="molecule type" value="Genomic_DNA"/>
</dbReference>
<dbReference type="EMBL" id="CP002684">
    <property type="protein sequence ID" value="AEE34496.1"/>
    <property type="molecule type" value="Genomic_DNA"/>
</dbReference>
<dbReference type="EMBL" id="AY086709">
    <property type="protein sequence ID" value="AAM63763.1"/>
    <property type="molecule type" value="mRNA"/>
</dbReference>
<dbReference type="EMBL" id="AY065186">
    <property type="protein sequence ID" value="AAL38362.1"/>
    <property type="molecule type" value="mRNA"/>
</dbReference>
<dbReference type="EMBL" id="AY093251">
    <property type="protein sequence ID" value="AAM13250.1"/>
    <property type="molecule type" value="mRNA"/>
</dbReference>
<dbReference type="PIR" id="E96688">
    <property type="entry name" value="E96688"/>
</dbReference>
<dbReference type="RefSeq" id="NP_564872.1">
    <property type="nucleotide sequence ID" value="NM_105304.2"/>
</dbReference>
<dbReference type="RefSeq" id="NP_974095.1">
    <property type="nucleotide sequence ID" value="NM_202366.3"/>
</dbReference>
<dbReference type="SMR" id="Q9C8Y4"/>
<dbReference type="FunCoup" id="Q9C8Y4">
    <property type="interactions" value="279"/>
</dbReference>
<dbReference type="STRING" id="3702.Q9C8Y4"/>
<dbReference type="iPTMnet" id="Q9C8Y4"/>
<dbReference type="PaxDb" id="3702-AT1G66330.2"/>
<dbReference type="ProteomicsDB" id="246528"/>
<dbReference type="EnsemblPlants" id="AT1G66330.1">
    <property type="protein sequence ID" value="AT1G66330.1"/>
    <property type="gene ID" value="AT1G66330"/>
</dbReference>
<dbReference type="EnsemblPlants" id="AT1G66330.2">
    <property type="protein sequence ID" value="AT1G66330.2"/>
    <property type="gene ID" value="AT1G66330"/>
</dbReference>
<dbReference type="GeneID" id="842950"/>
<dbReference type="Gramene" id="AT1G66330.1">
    <property type="protein sequence ID" value="AT1G66330.1"/>
    <property type="gene ID" value="AT1G66330"/>
</dbReference>
<dbReference type="Gramene" id="AT1G66330.2">
    <property type="protein sequence ID" value="AT1G66330.2"/>
    <property type="gene ID" value="AT1G66330"/>
</dbReference>
<dbReference type="KEGG" id="ath:AT1G66330"/>
<dbReference type="Araport" id="AT1G66330"/>
<dbReference type="TAIR" id="AT1G66330"/>
<dbReference type="eggNOG" id="ENOG502QPKY">
    <property type="taxonomic scope" value="Eukaryota"/>
</dbReference>
<dbReference type="HOGENOM" id="CLU_048664_0_0_1"/>
<dbReference type="InParanoid" id="Q9C8Y4"/>
<dbReference type="OMA" id="DMMVSKV"/>
<dbReference type="PhylomeDB" id="Q9C8Y4"/>
<dbReference type="PRO" id="PR:Q9C8Y4"/>
<dbReference type="Proteomes" id="UP000006548">
    <property type="component" value="Chromosome 1"/>
</dbReference>
<dbReference type="ExpressionAtlas" id="Q9C8Y4">
    <property type="expression patterns" value="baseline and differential"/>
</dbReference>
<dbReference type="GO" id="GO:0009507">
    <property type="term" value="C:chloroplast"/>
    <property type="evidence" value="ECO:0000314"/>
    <property type="project" value="TAIR"/>
</dbReference>
<dbReference type="GO" id="GO:0034599">
    <property type="term" value="P:cellular response to oxidative stress"/>
    <property type="evidence" value="ECO:0000315"/>
    <property type="project" value="TAIR"/>
</dbReference>
<dbReference type="GO" id="GO:0010150">
    <property type="term" value="P:leaf senescence"/>
    <property type="evidence" value="ECO:0000315"/>
    <property type="project" value="TAIR"/>
</dbReference>
<dbReference type="GO" id="GO:0072593">
    <property type="term" value="P:reactive oxygen species metabolic process"/>
    <property type="evidence" value="ECO:0000315"/>
    <property type="project" value="TAIR"/>
</dbReference>
<dbReference type="GO" id="GO:0010228">
    <property type="term" value="P:vegetative to reproductive phase transition of meristem"/>
    <property type="evidence" value="ECO:0000315"/>
    <property type="project" value="TAIR"/>
</dbReference>
<dbReference type="InterPro" id="IPR044973">
    <property type="entry name" value="AAF-like"/>
</dbReference>
<dbReference type="PANTHER" id="PTHR36725">
    <property type="entry name" value="SENESCENCE-ASSOCIATED PROTEIN AAF, CHLOROLPLASTIC"/>
    <property type="match status" value="1"/>
</dbReference>
<dbReference type="PANTHER" id="PTHR36725:SF1">
    <property type="entry name" value="SENESCENCE-ASSOCIATED PROTEIN AAF, CHLOROLPLASTIC"/>
    <property type="match status" value="1"/>
</dbReference>
<reference key="1">
    <citation type="journal article" date="2003" name="Plant Mol. Biol.">
        <title>Molecular characterization of a novel senescence-associated gene SPA15 induced during leaf senescence in sweet potato.</title>
        <authorList>
            <person name="Yap M.N."/>
            <person name="Lee R.H."/>
            <person name="Huang Y.J."/>
            <person name="Liao C.J."/>
            <person name="Chen S.C."/>
        </authorList>
    </citation>
    <scope>NUCLEOTIDE SEQUENCE [MRNA]</scope>
    <scope>TISSUE SPECIFICITY</scope>
    <scope>DEVELOPMENTAL STAGE</scope>
    <source>
        <strain>cv. Columbia</strain>
        <tissue>Leaf</tissue>
    </source>
</reference>
<reference key="2">
    <citation type="journal article" date="2000" name="Nature">
        <title>Sequence and analysis of chromosome 1 of the plant Arabidopsis thaliana.</title>
        <authorList>
            <person name="Theologis A."/>
            <person name="Ecker J.R."/>
            <person name="Palm C.J."/>
            <person name="Federspiel N.A."/>
            <person name="Kaul S."/>
            <person name="White O."/>
            <person name="Alonso J."/>
            <person name="Altafi H."/>
            <person name="Araujo R."/>
            <person name="Bowman C.L."/>
            <person name="Brooks S.Y."/>
            <person name="Buehler E."/>
            <person name="Chan A."/>
            <person name="Chao Q."/>
            <person name="Chen H."/>
            <person name="Cheuk R.F."/>
            <person name="Chin C.W."/>
            <person name="Chung M.K."/>
            <person name="Conn L."/>
            <person name="Conway A.B."/>
            <person name="Conway A.R."/>
            <person name="Creasy T.H."/>
            <person name="Dewar K."/>
            <person name="Dunn P."/>
            <person name="Etgu P."/>
            <person name="Feldblyum T.V."/>
            <person name="Feng J.-D."/>
            <person name="Fong B."/>
            <person name="Fujii C.Y."/>
            <person name="Gill J.E."/>
            <person name="Goldsmith A.D."/>
            <person name="Haas B."/>
            <person name="Hansen N.F."/>
            <person name="Hughes B."/>
            <person name="Huizar L."/>
            <person name="Hunter J.L."/>
            <person name="Jenkins J."/>
            <person name="Johnson-Hopson C."/>
            <person name="Khan S."/>
            <person name="Khaykin E."/>
            <person name="Kim C.J."/>
            <person name="Koo H.L."/>
            <person name="Kremenetskaia I."/>
            <person name="Kurtz D.B."/>
            <person name="Kwan A."/>
            <person name="Lam B."/>
            <person name="Langin-Hooper S."/>
            <person name="Lee A."/>
            <person name="Lee J.M."/>
            <person name="Lenz C.A."/>
            <person name="Li J.H."/>
            <person name="Li Y.-P."/>
            <person name="Lin X."/>
            <person name="Liu S.X."/>
            <person name="Liu Z.A."/>
            <person name="Luros J.S."/>
            <person name="Maiti R."/>
            <person name="Marziali A."/>
            <person name="Militscher J."/>
            <person name="Miranda M."/>
            <person name="Nguyen M."/>
            <person name="Nierman W.C."/>
            <person name="Osborne B.I."/>
            <person name="Pai G."/>
            <person name="Peterson J."/>
            <person name="Pham P.K."/>
            <person name="Rizzo M."/>
            <person name="Rooney T."/>
            <person name="Rowley D."/>
            <person name="Sakano H."/>
            <person name="Salzberg S.L."/>
            <person name="Schwartz J.R."/>
            <person name="Shinn P."/>
            <person name="Southwick A.M."/>
            <person name="Sun H."/>
            <person name="Tallon L.J."/>
            <person name="Tambunga G."/>
            <person name="Toriumi M.J."/>
            <person name="Town C.D."/>
            <person name="Utterback T."/>
            <person name="Van Aken S."/>
            <person name="Vaysberg M."/>
            <person name="Vysotskaia V.S."/>
            <person name="Walker M."/>
            <person name="Wu D."/>
            <person name="Yu G."/>
            <person name="Fraser C.M."/>
            <person name="Venter J.C."/>
            <person name="Davis R.W."/>
        </authorList>
    </citation>
    <scope>NUCLEOTIDE SEQUENCE [LARGE SCALE GENOMIC DNA]</scope>
    <source>
        <strain>cv. Columbia</strain>
    </source>
</reference>
<reference key="3">
    <citation type="journal article" date="2017" name="Plant J.">
        <title>Araport11: a complete reannotation of the Arabidopsis thaliana reference genome.</title>
        <authorList>
            <person name="Cheng C.Y."/>
            <person name="Krishnakumar V."/>
            <person name="Chan A.P."/>
            <person name="Thibaud-Nissen F."/>
            <person name="Schobel S."/>
            <person name="Town C.D."/>
        </authorList>
    </citation>
    <scope>GENOME REANNOTATION</scope>
    <source>
        <strain>cv. Columbia</strain>
    </source>
</reference>
<reference key="4">
    <citation type="submission" date="2002-03" db="EMBL/GenBank/DDBJ databases">
        <title>Full-length cDNA from Arabidopsis thaliana.</title>
        <authorList>
            <person name="Brover V.V."/>
            <person name="Troukhan M.E."/>
            <person name="Alexandrov N.A."/>
            <person name="Lu Y.-P."/>
            <person name="Flavell R.B."/>
            <person name="Feldmann K.A."/>
        </authorList>
    </citation>
    <scope>NUCLEOTIDE SEQUENCE [LARGE SCALE MRNA]</scope>
</reference>
<reference key="5">
    <citation type="journal article" date="2003" name="Science">
        <title>Empirical analysis of transcriptional activity in the Arabidopsis genome.</title>
        <authorList>
            <person name="Yamada K."/>
            <person name="Lim J."/>
            <person name="Dale J.M."/>
            <person name="Chen H."/>
            <person name="Shinn P."/>
            <person name="Palm C.J."/>
            <person name="Southwick A.M."/>
            <person name="Wu H.C."/>
            <person name="Kim C.J."/>
            <person name="Nguyen M."/>
            <person name="Pham P.K."/>
            <person name="Cheuk R.F."/>
            <person name="Karlin-Newmann G."/>
            <person name="Liu S.X."/>
            <person name="Lam B."/>
            <person name="Sakano H."/>
            <person name="Wu T."/>
            <person name="Yu G."/>
            <person name="Miranda M."/>
            <person name="Quach H.L."/>
            <person name="Tripp M."/>
            <person name="Chang C.H."/>
            <person name="Lee J.M."/>
            <person name="Toriumi M.J."/>
            <person name="Chan M.M."/>
            <person name="Tang C.C."/>
            <person name="Onodera C.S."/>
            <person name="Deng J.M."/>
            <person name="Akiyama K."/>
            <person name="Ansari Y."/>
            <person name="Arakawa T."/>
            <person name="Banh J."/>
            <person name="Banno F."/>
            <person name="Bowser L."/>
            <person name="Brooks S.Y."/>
            <person name="Carninci P."/>
            <person name="Chao Q."/>
            <person name="Choy N."/>
            <person name="Enju A."/>
            <person name="Goldsmith A.D."/>
            <person name="Gurjal M."/>
            <person name="Hansen N.F."/>
            <person name="Hayashizaki Y."/>
            <person name="Johnson-Hopson C."/>
            <person name="Hsuan V.W."/>
            <person name="Iida K."/>
            <person name="Karnes M."/>
            <person name="Khan S."/>
            <person name="Koesema E."/>
            <person name="Ishida J."/>
            <person name="Jiang P.X."/>
            <person name="Jones T."/>
            <person name="Kawai J."/>
            <person name="Kamiya A."/>
            <person name="Meyers C."/>
            <person name="Nakajima M."/>
            <person name="Narusaka M."/>
            <person name="Seki M."/>
            <person name="Sakurai T."/>
            <person name="Satou M."/>
            <person name="Tamse R."/>
            <person name="Vaysberg M."/>
            <person name="Wallender E.K."/>
            <person name="Wong C."/>
            <person name="Yamamura Y."/>
            <person name="Yuan S."/>
            <person name="Shinozaki K."/>
            <person name="Davis R.W."/>
            <person name="Theologis A."/>
            <person name="Ecker J.R."/>
        </authorList>
    </citation>
    <scope>NUCLEOTIDE SEQUENCE [LARGE SCALE MRNA] OF 218-417</scope>
    <source>
        <strain>cv. Columbia</strain>
    </source>
</reference>
<reference key="6">
    <citation type="journal article" date="2012" name="J. Exp. Bot.">
        <title>Role of ARABIDOPSIS A-FIFTEEN in regulating leaf senescence involves response to reactive oxygen species and is dependent on ETHYLENE INSENSITIVE2.</title>
        <authorList>
            <person name="Chen G.H."/>
            <person name="Liu C.P."/>
            <person name="Chen S.C."/>
            <person name="Wang L.C."/>
        </authorList>
    </citation>
    <scope>FUNCTION</scope>
    <scope>SUBCELLULAR LOCATION</scope>
    <scope>TISSUE SPECIFICITY</scope>
    <scope>DEVELOPMENTAL STAGE</scope>
    <scope>INDUCTION</scope>
    <scope>DISRUPTION PHENOTYPE</scope>
</reference>
<organism>
    <name type="scientific">Arabidopsis thaliana</name>
    <name type="common">Mouse-ear cress</name>
    <dbReference type="NCBI Taxonomy" id="3702"/>
    <lineage>
        <taxon>Eukaryota</taxon>
        <taxon>Viridiplantae</taxon>
        <taxon>Streptophyta</taxon>
        <taxon>Embryophyta</taxon>
        <taxon>Tracheophyta</taxon>
        <taxon>Spermatophyta</taxon>
        <taxon>Magnoliopsida</taxon>
        <taxon>eudicotyledons</taxon>
        <taxon>Gunneridae</taxon>
        <taxon>Pentapetalae</taxon>
        <taxon>rosids</taxon>
        <taxon>malvids</taxon>
        <taxon>Brassicales</taxon>
        <taxon>Brassicaceae</taxon>
        <taxon>Camelineae</taxon>
        <taxon>Arabidopsis</taxon>
    </lineage>
</organism>
<accession>Q9C8Y4</accession>
<accession>Q5K6K5</accession>
<accession>Q8LCA3</accession>
<accession>Q8VZ77</accession>
<sequence>MALNVSKVVPNSPILVKSVNASRSRRVLLAYVHHPLAANKGSSIEELKQGLCCTKTVTFVSSRRCSTLCFVGKSQDTETNSQVVQKEGEKQVMPRRKSSNSSQLLVEYVSNDAKFVNERARNDFVLLSRGIMRLDARARQDVAILGSGFLKLDARAREDTEKIDRDVKRKAERLHHIATIFKNIAESKLKNAADKHWSDGALEADLRRADFRAKQRAMEDALMALEFIKNIHDMMVNKMVDSLVTSETGTTDRISLEKNGIALGFFPGEVSSDRISAIEEAYKSMASALSEADGIDYTDPEELELLVTTLIDLDAMDGKSSASLLAECSSSPDVNTRKALANALAAAPSMWTLGNAGMGALQRLAEDSNPAIAAAASRAINALKKQWEVEEGDSLRFMMNFERPNDDDDVDSDLDEI</sequence>
<keyword id="KW-0150">Chloroplast</keyword>
<keyword id="KW-0934">Plastid</keyword>
<keyword id="KW-1185">Reference proteome</keyword>
<keyword id="KW-0809">Transit peptide</keyword>
<comment type="function">
    <text evidence="3">Involved in modulation of redox homeostasis to regulate leaf senescence mediated by age and stress factors during plant development. Its function is dependent of EIN2, a central factor of ethylene signaling.</text>
</comment>
<comment type="subcellular location">
    <subcellularLocation>
        <location evidence="3">Plastid</location>
        <location evidence="3">Chloroplast</location>
    </subcellularLocation>
</comment>
<comment type="tissue specificity">
    <text evidence="2 3">Expressed in leaves (PubMed:12650614). Expressed in 7-day-old seedlings, roots, rosette leaves, cauline leaves and flower buds (PubMed:21940719).</text>
</comment>
<comment type="developmental stage">
    <text evidence="2 3">Up-regulated during leaf senescence.</text>
</comment>
<comment type="induction">
    <text evidence="3">Induced by abscisic acid (ABA), salicylate (SA), methyl jasmonate (MeJA) and ethylene.</text>
</comment>
<comment type="disruption phenotype">
    <text evidence="3">Delayed age-dependent and darkness-induced senescence. Increased resistance to oxidative stress.</text>
</comment>
<comment type="miscellaneous">
    <text evidence="3">Plants overexpressing AAF exhibit increased root growth, elevated level of cellular reactive oxygen species (ROS), enhanced sensitivity to oxidative stress, and early leaf senescence induced by continuous darkness and by age-dependent signaling.</text>
</comment>
<comment type="similarity">
    <text>Belongs to the ATA15/OSA15 family.</text>
</comment>
<gene>
    <name evidence="5" type="primary">AAF</name>
    <name evidence="4" type="synonym">ATA15</name>
    <name evidence="7" type="ordered locus">At1g66330</name>
    <name evidence="8" type="ORF">T27F4.8</name>
</gene>
<proteinExistence type="evidence at transcript level"/>
<protein>
    <recommendedName>
        <fullName evidence="6">Senescence-associated protein AAF, chloroplastic</fullName>
    </recommendedName>
    <alternativeName>
        <fullName evidence="5">Protein ARABIDOPSIS A-FIFTEEN</fullName>
    </alternativeName>
</protein>
<name>ATA15_ARATH</name>